<accession>P0CN61</accession>
<accession>Q55UP6</accession>
<accession>Q5KHP5</accession>
<accession>Q8J0W1</accession>
<accession>Q8J0X2</accession>
<gene>
    <name type="primary">ETF1</name>
    <name type="ordered locus">CNBD0620</name>
</gene>
<sequence length="346" mass="36189">MLYRSALRASRSFTPRLASTNSRLVSSLVFLEHKAGKLNEASLSAVTAAKTLGNDTHGLLVGTKSEIENVLDRTKEIKDLSKIYLATSDTYSHSLAEPLASLLASIASAKDVSHIFAAHTAVGKNIFPRLAGLLDTSLIADIIALESSGDTFTRPIYAGNAVLTIKSSPKDSVKVVTVRSTAFDKAAVANGSAAVEDVDIITVDTPTQFVSEELTVSSRPDLASAARVVSGGRALKSKESFDTILDPLADSLGAAVGASRAAVDAGYADNSLQVGQTGKVVAPELYVAIGISGAIQHLAGMKESKMIIAINKDPDAPIFQVADVGLVADLFESVPQLVKEIDNVKV</sequence>
<organism>
    <name type="scientific">Cryptococcus neoformans var. neoformans serotype D (strain B-3501A)</name>
    <name type="common">Filobasidiella neoformans</name>
    <dbReference type="NCBI Taxonomy" id="283643"/>
    <lineage>
        <taxon>Eukaryota</taxon>
        <taxon>Fungi</taxon>
        <taxon>Dikarya</taxon>
        <taxon>Basidiomycota</taxon>
        <taxon>Agaricomycotina</taxon>
        <taxon>Tremellomycetes</taxon>
        <taxon>Tremellales</taxon>
        <taxon>Cryptococcaceae</taxon>
        <taxon>Cryptococcus</taxon>
        <taxon>Cryptococcus neoformans species complex</taxon>
    </lineage>
</organism>
<proteinExistence type="inferred from homology"/>
<name>ETFA_CRYNB</name>
<feature type="transit peptide" description="Mitochondrion" evidence="2">
    <location>
        <begin position="1"/>
        <end status="unknown"/>
    </location>
</feature>
<feature type="chain" id="PRO_0000410085" description="Probable electron transfer flavoprotein subunit alpha, mitochondrial">
    <location>
        <begin status="unknown"/>
        <end position="346"/>
    </location>
</feature>
<feature type="binding site" evidence="2">
    <location>
        <begin position="285"/>
        <end position="313"/>
    </location>
    <ligand>
        <name>FAD</name>
        <dbReference type="ChEBI" id="CHEBI:57692"/>
    </ligand>
</feature>
<reference key="1">
    <citation type="journal article" date="2005" name="Science">
        <title>The genome of the basidiomycetous yeast and human pathogen Cryptococcus neoformans.</title>
        <authorList>
            <person name="Loftus B.J."/>
            <person name="Fung E."/>
            <person name="Roncaglia P."/>
            <person name="Rowley D."/>
            <person name="Amedeo P."/>
            <person name="Bruno D."/>
            <person name="Vamathevan J."/>
            <person name="Miranda M."/>
            <person name="Anderson I.J."/>
            <person name="Fraser J.A."/>
            <person name="Allen J.E."/>
            <person name="Bosdet I.E."/>
            <person name="Brent M.R."/>
            <person name="Chiu R."/>
            <person name="Doering T.L."/>
            <person name="Donlin M.J."/>
            <person name="D'Souza C.A."/>
            <person name="Fox D.S."/>
            <person name="Grinberg V."/>
            <person name="Fu J."/>
            <person name="Fukushima M."/>
            <person name="Haas B.J."/>
            <person name="Huang J.C."/>
            <person name="Janbon G."/>
            <person name="Jones S.J.M."/>
            <person name="Koo H.L."/>
            <person name="Krzywinski M.I."/>
            <person name="Kwon-Chung K.J."/>
            <person name="Lengeler K.B."/>
            <person name="Maiti R."/>
            <person name="Marra M.A."/>
            <person name="Marra R.E."/>
            <person name="Mathewson C.A."/>
            <person name="Mitchell T.G."/>
            <person name="Pertea M."/>
            <person name="Riggs F.R."/>
            <person name="Salzberg S.L."/>
            <person name="Schein J.E."/>
            <person name="Shvartsbeyn A."/>
            <person name="Shin H."/>
            <person name="Shumway M."/>
            <person name="Specht C.A."/>
            <person name="Suh B.B."/>
            <person name="Tenney A."/>
            <person name="Utterback T.R."/>
            <person name="Wickes B.L."/>
            <person name="Wortman J.R."/>
            <person name="Wye N.H."/>
            <person name="Kronstad J.W."/>
            <person name="Lodge J.K."/>
            <person name="Heitman J."/>
            <person name="Davis R.W."/>
            <person name="Fraser C.M."/>
            <person name="Hyman R.W."/>
        </authorList>
    </citation>
    <scope>NUCLEOTIDE SEQUENCE [LARGE SCALE GENOMIC DNA]</scope>
    <source>
        <strain>B-3501A</strain>
    </source>
</reference>
<keyword id="KW-0249">Electron transport</keyword>
<keyword id="KW-0274">FAD</keyword>
<keyword id="KW-0285">Flavoprotein</keyword>
<keyword id="KW-0496">Mitochondrion</keyword>
<keyword id="KW-0809">Transit peptide</keyword>
<keyword id="KW-0813">Transport</keyword>
<comment type="function">
    <text evidence="1">The electron transfer flavoprotein serves as a specific electron acceptor for several dehydrogenases, including five acyl-CoA dehydrogenases, glutaryl-CoA and sarcosine dehydrogenase. It transfers the electrons to the main mitochondrial respiratory chain via ETF-ubiquinone oxidoreductase (ETF dehydrogenase) (By similarity).</text>
</comment>
<comment type="cofactor">
    <cofactor evidence="1">
        <name>FAD</name>
        <dbReference type="ChEBI" id="CHEBI:57692"/>
    </cofactor>
    <text evidence="1">Binds 1 FAD per dimer.</text>
</comment>
<comment type="subunit">
    <text evidence="1">Heterodimer of an alpha and a beta subunit.</text>
</comment>
<comment type="subcellular location">
    <subcellularLocation>
        <location evidence="1">Mitochondrion matrix</location>
    </subcellularLocation>
</comment>
<comment type="similarity">
    <text evidence="3">Belongs to the ETF alpha-subunit/FixB family.</text>
</comment>
<protein>
    <recommendedName>
        <fullName>Probable electron transfer flavoprotein subunit alpha, mitochondrial</fullName>
        <shortName>Alpha-ETF</shortName>
    </recommendedName>
</protein>
<evidence type="ECO:0000250" key="1"/>
<evidence type="ECO:0000255" key="2"/>
<evidence type="ECO:0000305" key="3"/>
<dbReference type="EMBL" id="AAEY01000019">
    <property type="protein sequence ID" value="EAL21366.1"/>
    <property type="molecule type" value="Genomic_DNA"/>
</dbReference>
<dbReference type="RefSeq" id="XP_776013.1">
    <property type="nucleotide sequence ID" value="XM_770920.1"/>
</dbReference>
<dbReference type="SMR" id="P0CN61"/>
<dbReference type="EnsemblFungi" id="AAW43187">
    <property type="protein sequence ID" value="AAW43187"/>
    <property type="gene ID" value="CND05770"/>
</dbReference>
<dbReference type="GeneID" id="4935451"/>
<dbReference type="KEGG" id="cnb:CNBD0620"/>
<dbReference type="VEuPathDB" id="FungiDB:CNBD0620"/>
<dbReference type="HOGENOM" id="CLU_034178_0_1_1"/>
<dbReference type="OrthoDB" id="7234at5206"/>
<dbReference type="GO" id="GO:0005759">
    <property type="term" value="C:mitochondrial matrix"/>
    <property type="evidence" value="ECO:0007669"/>
    <property type="project" value="UniProtKB-SubCell"/>
</dbReference>
<dbReference type="GO" id="GO:0009055">
    <property type="term" value="F:electron transfer activity"/>
    <property type="evidence" value="ECO:0007669"/>
    <property type="project" value="InterPro"/>
</dbReference>
<dbReference type="GO" id="GO:0050660">
    <property type="term" value="F:flavin adenine dinucleotide binding"/>
    <property type="evidence" value="ECO:0007669"/>
    <property type="project" value="InterPro"/>
</dbReference>
<dbReference type="GO" id="GO:0033539">
    <property type="term" value="P:fatty acid beta-oxidation using acyl-CoA dehydrogenase"/>
    <property type="evidence" value="ECO:0007669"/>
    <property type="project" value="TreeGrafter"/>
</dbReference>
<dbReference type="CDD" id="cd01715">
    <property type="entry name" value="ETF_alpha"/>
    <property type="match status" value="1"/>
</dbReference>
<dbReference type="FunFam" id="3.40.50.1220:FF:000001">
    <property type="entry name" value="Electron transfer flavoprotein, alpha subunit"/>
    <property type="match status" value="1"/>
</dbReference>
<dbReference type="Gene3D" id="3.40.50.620">
    <property type="entry name" value="HUPs"/>
    <property type="match status" value="1"/>
</dbReference>
<dbReference type="Gene3D" id="3.40.50.1220">
    <property type="entry name" value="TPP-binding domain"/>
    <property type="match status" value="1"/>
</dbReference>
<dbReference type="InterPro" id="IPR029035">
    <property type="entry name" value="DHS-like_NAD/FAD-binding_dom"/>
</dbReference>
<dbReference type="InterPro" id="IPR014730">
    <property type="entry name" value="ETF_a/b_N"/>
</dbReference>
<dbReference type="InterPro" id="IPR001308">
    <property type="entry name" value="ETF_a/FixB"/>
</dbReference>
<dbReference type="InterPro" id="IPR033947">
    <property type="entry name" value="ETF_alpha_N"/>
</dbReference>
<dbReference type="InterPro" id="IPR014731">
    <property type="entry name" value="ETF_asu_C"/>
</dbReference>
<dbReference type="InterPro" id="IPR018206">
    <property type="entry name" value="ETF_asu_C_CS"/>
</dbReference>
<dbReference type="InterPro" id="IPR014729">
    <property type="entry name" value="Rossmann-like_a/b/a_fold"/>
</dbReference>
<dbReference type="PANTHER" id="PTHR43153">
    <property type="entry name" value="ELECTRON TRANSFER FLAVOPROTEIN ALPHA"/>
    <property type="match status" value="1"/>
</dbReference>
<dbReference type="PANTHER" id="PTHR43153:SF1">
    <property type="entry name" value="ELECTRON TRANSFER FLAVOPROTEIN SUBUNIT ALPHA, MITOCHONDRIAL"/>
    <property type="match status" value="1"/>
</dbReference>
<dbReference type="Pfam" id="PF01012">
    <property type="entry name" value="ETF"/>
    <property type="match status" value="1"/>
</dbReference>
<dbReference type="Pfam" id="PF00766">
    <property type="entry name" value="ETF_alpha"/>
    <property type="match status" value="1"/>
</dbReference>
<dbReference type="PIRSF" id="PIRSF000089">
    <property type="entry name" value="Electra_flavoP_a"/>
    <property type="match status" value="1"/>
</dbReference>
<dbReference type="SMART" id="SM00893">
    <property type="entry name" value="ETF"/>
    <property type="match status" value="1"/>
</dbReference>
<dbReference type="SUPFAM" id="SSF52402">
    <property type="entry name" value="Adenine nucleotide alpha hydrolases-like"/>
    <property type="match status" value="1"/>
</dbReference>
<dbReference type="SUPFAM" id="SSF52467">
    <property type="entry name" value="DHS-like NAD/FAD-binding domain"/>
    <property type="match status" value="1"/>
</dbReference>
<dbReference type="PROSITE" id="PS00696">
    <property type="entry name" value="ETF_ALPHA"/>
    <property type="match status" value="1"/>
</dbReference>